<accession>Q7UN18</accession>
<name>RL23_RHOBA</name>
<gene>
    <name evidence="1" type="primary">rplW</name>
    <name type="ordered locus">RB7836</name>
</gene>
<dbReference type="EMBL" id="BX294146">
    <property type="protein sequence ID" value="CAD75601.1"/>
    <property type="molecule type" value="Genomic_DNA"/>
</dbReference>
<dbReference type="RefSeq" id="NP_868054.1">
    <property type="nucleotide sequence ID" value="NC_005027.1"/>
</dbReference>
<dbReference type="RefSeq" id="WP_007326798.1">
    <property type="nucleotide sequence ID" value="NC_005027.1"/>
</dbReference>
<dbReference type="SMR" id="Q7UN18"/>
<dbReference type="FunCoup" id="Q7UN18">
    <property type="interactions" value="482"/>
</dbReference>
<dbReference type="STRING" id="243090.RB7836"/>
<dbReference type="EnsemblBacteria" id="CAD75601">
    <property type="protein sequence ID" value="CAD75601"/>
    <property type="gene ID" value="RB7836"/>
</dbReference>
<dbReference type="KEGG" id="rba:RB7836"/>
<dbReference type="PATRIC" id="fig|243090.15.peg.3784"/>
<dbReference type="eggNOG" id="COG0089">
    <property type="taxonomic scope" value="Bacteria"/>
</dbReference>
<dbReference type="HOGENOM" id="CLU_037562_3_1_0"/>
<dbReference type="InParanoid" id="Q7UN18"/>
<dbReference type="OrthoDB" id="9793353at2"/>
<dbReference type="Proteomes" id="UP000001025">
    <property type="component" value="Chromosome"/>
</dbReference>
<dbReference type="GO" id="GO:0022625">
    <property type="term" value="C:cytosolic large ribosomal subunit"/>
    <property type="evidence" value="ECO:0000318"/>
    <property type="project" value="GO_Central"/>
</dbReference>
<dbReference type="GO" id="GO:0019843">
    <property type="term" value="F:rRNA binding"/>
    <property type="evidence" value="ECO:0007669"/>
    <property type="project" value="UniProtKB-UniRule"/>
</dbReference>
<dbReference type="GO" id="GO:0003735">
    <property type="term" value="F:structural constituent of ribosome"/>
    <property type="evidence" value="ECO:0000318"/>
    <property type="project" value="GO_Central"/>
</dbReference>
<dbReference type="GO" id="GO:0006412">
    <property type="term" value="P:translation"/>
    <property type="evidence" value="ECO:0007669"/>
    <property type="project" value="UniProtKB-UniRule"/>
</dbReference>
<dbReference type="FunFam" id="3.30.70.330:FF:000001">
    <property type="entry name" value="50S ribosomal protein L23"/>
    <property type="match status" value="1"/>
</dbReference>
<dbReference type="Gene3D" id="3.30.70.330">
    <property type="match status" value="1"/>
</dbReference>
<dbReference type="HAMAP" id="MF_01369_B">
    <property type="entry name" value="Ribosomal_uL23_B"/>
    <property type="match status" value="1"/>
</dbReference>
<dbReference type="InterPro" id="IPR012677">
    <property type="entry name" value="Nucleotide-bd_a/b_plait_sf"/>
</dbReference>
<dbReference type="InterPro" id="IPR013025">
    <property type="entry name" value="Ribosomal_uL23-like"/>
</dbReference>
<dbReference type="InterPro" id="IPR012678">
    <property type="entry name" value="Ribosomal_uL23/eL15/eS24_sf"/>
</dbReference>
<dbReference type="NCBIfam" id="NF004359">
    <property type="entry name" value="PRK05738.1-3"/>
    <property type="match status" value="1"/>
</dbReference>
<dbReference type="NCBIfam" id="NF004363">
    <property type="entry name" value="PRK05738.2-4"/>
    <property type="match status" value="1"/>
</dbReference>
<dbReference type="PANTHER" id="PTHR11620">
    <property type="entry name" value="60S RIBOSOMAL PROTEIN L23A"/>
    <property type="match status" value="1"/>
</dbReference>
<dbReference type="Pfam" id="PF00276">
    <property type="entry name" value="Ribosomal_L23"/>
    <property type="match status" value="1"/>
</dbReference>
<dbReference type="SUPFAM" id="SSF54189">
    <property type="entry name" value="Ribosomal proteins S24e, L23 and L15e"/>
    <property type="match status" value="1"/>
</dbReference>
<organism>
    <name type="scientific">Rhodopirellula baltica (strain DSM 10527 / NCIMB 13988 / SH1)</name>
    <dbReference type="NCBI Taxonomy" id="243090"/>
    <lineage>
        <taxon>Bacteria</taxon>
        <taxon>Pseudomonadati</taxon>
        <taxon>Planctomycetota</taxon>
        <taxon>Planctomycetia</taxon>
        <taxon>Pirellulales</taxon>
        <taxon>Pirellulaceae</taxon>
        <taxon>Rhodopirellula</taxon>
    </lineage>
</organism>
<protein>
    <recommendedName>
        <fullName evidence="1">Large ribosomal subunit protein uL23</fullName>
    </recommendedName>
    <alternativeName>
        <fullName evidence="2">50S ribosomal protein L23</fullName>
    </alternativeName>
</protein>
<comment type="function">
    <text evidence="1">One of the early assembly proteins it binds 23S rRNA. One of the proteins that surrounds the polypeptide exit tunnel on the outside of the ribosome. Forms the main docking site for trigger factor binding to the ribosome.</text>
</comment>
<comment type="subunit">
    <text evidence="1">Part of the 50S ribosomal subunit. Contacts protein L29, and trigger factor when it is bound to the ribosome.</text>
</comment>
<comment type="similarity">
    <text evidence="1">Belongs to the universal ribosomal protein uL23 family.</text>
</comment>
<feature type="chain" id="PRO_0000272823" description="Large ribosomal subunit protein uL23">
    <location>
        <begin position="1"/>
        <end position="107"/>
    </location>
</feature>
<evidence type="ECO:0000255" key="1">
    <source>
        <dbReference type="HAMAP-Rule" id="MF_01369"/>
    </source>
</evidence>
<evidence type="ECO:0000305" key="2"/>
<keyword id="KW-1185">Reference proteome</keyword>
<keyword id="KW-0687">Ribonucleoprotein</keyword>
<keyword id="KW-0689">Ribosomal protein</keyword>
<keyword id="KW-0694">RNA-binding</keyword>
<keyword id="KW-0699">rRNA-binding</keyword>
<proteinExistence type="inferred from homology"/>
<sequence length="107" mass="12651">MSAIQPPKPVERKIELEPHQILLKPLVTEKGVHRATRNNQYAFQIHRDATKLDVKKAVEHLFDVKVLKVRTQTRKGKARRFKYKIGRTSDWKKAIVSLHEDHRIDFF</sequence>
<reference key="1">
    <citation type="journal article" date="2003" name="Proc. Natl. Acad. Sci. U.S.A.">
        <title>Complete genome sequence of the marine planctomycete Pirellula sp. strain 1.</title>
        <authorList>
            <person name="Gloeckner F.O."/>
            <person name="Kube M."/>
            <person name="Bauer M."/>
            <person name="Teeling H."/>
            <person name="Lombardot T."/>
            <person name="Ludwig W."/>
            <person name="Gade D."/>
            <person name="Beck A."/>
            <person name="Borzym K."/>
            <person name="Heitmann K."/>
            <person name="Rabus R."/>
            <person name="Schlesner H."/>
            <person name="Amann R."/>
            <person name="Reinhardt R."/>
        </authorList>
    </citation>
    <scope>NUCLEOTIDE SEQUENCE [LARGE SCALE GENOMIC DNA]</scope>
    <source>
        <strain>DSM 10527 / NCIMB 13988 / SH1</strain>
    </source>
</reference>